<name>PHMT_MYCLE</name>
<gene>
    <name type="ordered locus">ML0130</name>
</gene>
<reference key="1">
    <citation type="journal article" date="2001" name="Nature">
        <title>Massive gene decay in the leprosy bacillus.</title>
        <authorList>
            <person name="Cole S.T."/>
            <person name="Eiglmeier K."/>
            <person name="Parkhill J."/>
            <person name="James K.D."/>
            <person name="Thomson N.R."/>
            <person name="Wheeler P.R."/>
            <person name="Honore N."/>
            <person name="Garnier T."/>
            <person name="Churcher C.M."/>
            <person name="Harris D.E."/>
            <person name="Mungall K.L."/>
            <person name="Basham D."/>
            <person name="Brown D."/>
            <person name="Chillingworth T."/>
            <person name="Connor R."/>
            <person name="Davies R.M."/>
            <person name="Devlin K."/>
            <person name="Duthoy S."/>
            <person name="Feltwell T."/>
            <person name="Fraser A."/>
            <person name="Hamlin N."/>
            <person name="Holroyd S."/>
            <person name="Hornsby T."/>
            <person name="Jagels K."/>
            <person name="Lacroix C."/>
            <person name="Maclean J."/>
            <person name="Moule S."/>
            <person name="Murphy L.D."/>
            <person name="Oliver K."/>
            <person name="Quail M.A."/>
            <person name="Rajandream M.A."/>
            <person name="Rutherford K.M."/>
            <person name="Rutter S."/>
            <person name="Seeger K."/>
            <person name="Simon S."/>
            <person name="Simmonds M."/>
            <person name="Skelton J."/>
            <person name="Squares R."/>
            <person name="Squares S."/>
            <person name="Stevens K."/>
            <person name="Taylor K."/>
            <person name="Whitehead S."/>
            <person name="Woodward J.R."/>
            <person name="Barrell B.G."/>
        </authorList>
    </citation>
    <scope>NUCLEOTIDE SEQUENCE [LARGE SCALE GENOMIC DNA]</scope>
    <source>
        <strain>TN</strain>
    </source>
</reference>
<protein>
    <recommendedName>
        <fullName>Phthiotriol/phenolphthiotriol dimycocerosates methyltransferase</fullName>
        <ecNumber>2.1.1.-</ecNumber>
    </recommendedName>
</protein>
<dbReference type="EC" id="2.1.1.-"/>
<dbReference type="EMBL" id="AL583917">
    <property type="protein sequence ID" value="CAC29638.1"/>
    <property type="molecule type" value="Genomic_DNA"/>
</dbReference>
<dbReference type="PIR" id="B86925">
    <property type="entry name" value="B86925"/>
</dbReference>
<dbReference type="RefSeq" id="NP_301224.1">
    <property type="nucleotide sequence ID" value="NC_002677.1"/>
</dbReference>
<dbReference type="RefSeq" id="WP_010907549.1">
    <property type="nucleotide sequence ID" value="NC_002677.1"/>
</dbReference>
<dbReference type="SMR" id="Q9CD86"/>
<dbReference type="STRING" id="272631.gene:17573945"/>
<dbReference type="KEGG" id="mle:ML0130"/>
<dbReference type="PATRIC" id="fig|272631.5.peg.198"/>
<dbReference type="Leproma" id="ML0130"/>
<dbReference type="eggNOG" id="COG2226">
    <property type="taxonomic scope" value="Bacteria"/>
</dbReference>
<dbReference type="HOGENOM" id="CLU_068661_0_0_11"/>
<dbReference type="OrthoDB" id="9769602at2"/>
<dbReference type="Proteomes" id="UP000000806">
    <property type="component" value="Chromosome"/>
</dbReference>
<dbReference type="GO" id="GO:0008757">
    <property type="term" value="F:S-adenosylmethionine-dependent methyltransferase activity"/>
    <property type="evidence" value="ECO:0007669"/>
    <property type="project" value="InterPro"/>
</dbReference>
<dbReference type="GO" id="GO:0006629">
    <property type="term" value="P:lipid metabolic process"/>
    <property type="evidence" value="ECO:0007669"/>
    <property type="project" value="UniProtKB-KW"/>
</dbReference>
<dbReference type="GO" id="GO:0032259">
    <property type="term" value="P:methylation"/>
    <property type="evidence" value="ECO:0007669"/>
    <property type="project" value="UniProtKB-KW"/>
</dbReference>
<dbReference type="CDD" id="cd02440">
    <property type="entry name" value="AdoMet_MTases"/>
    <property type="match status" value="1"/>
</dbReference>
<dbReference type="Gene3D" id="3.40.50.150">
    <property type="entry name" value="Vaccinia Virus protein VP39"/>
    <property type="match status" value="1"/>
</dbReference>
<dbReference type="InterPro" id="IPR013216">
    <property type="entry name" value="Methyltransf_11"/>
</dbReference>
<dbReference type="InterPro" id="IPR050508">
    <property type="entry name" value="Methyltransf_Superfamily"/>
</dbReference>
<dbReference type="InterPro" id="IPR054877">
    <property type="entry name" value="PthPhpthDimycoMt"/>
</dbReference>
<dbReference type="InterPro" id="IPR029063">
    <property type="entry name" value="SAM-dependent_MTases_sf"/>
</dbReference>
<dbReference type="NCBIfam" id="NF045823">
    <property type="entry name" value="PthPhpthDimycoMt"/>
    <property type="match status" value="1"/>
</dbReference>
<dbReference type="PANTHER" id="PTHR42912">
    <property type="entry name" value="METHYLTRANSFERASE"/>
    <property type="match status" value="1"/>
</dbReference>
<dbReference type="PANTHER" id="PTHR42912:SF93">
    <property type="entry name" value="N6-ADENOSINE-METHYLTRANSFERASE TMT1A"/>
    <property type="match status" value="1"/>
</dbReference>
<dbReference type="Pfam" id="PF08241">
    <property type="entry name" value="Methyltransf_11"/>
    <property type="match status" value="1"/>
</dbReference>
<dbReference type="SUPFAM" id="SSF53335">
    <property type="entry name" value="S-adenosyl-L-methionine-dependent methyltransferases"/>
    <property type="match status" value="1"/>
</dbReference>
<feature type="chain" id="PRO_0000305164" description="Phthiotriol/phenolphthiotriol dimycocerosates methyltransferase">
    <location>
        <begin position="1"/>
        <end position="270"/>
    </location>
</feature>
<comment type="function">
    <text evidence="1">Catalyzes the methylation of the lipid moiety of the intermediate compounds phthiotriol and glycosylated phenolphthiotriol dimycoserosates to form phthiocerol dimycocerosates (DIM A) and glycosylated phenolphthiocerol dimycocerosates (PGL).</text>
</comment>
<comment type="similarity">
    <text evidence="2">Belongs to the methyltransferase superfamily. Phthiotriol/phenolphthiotriol dimycocerosates methyltransferase family.</text>
</comment>
<organism>
    <name type="scientific">Mycobacterium leprae (strain TN)</name>
    <dbReference type="NCBI Taxonomy" id="272631"/>
    <lineage>
        <taxon>Bacteria</taxon>
        <taxon>Bacillati</taxon>
        <taxon>Actinomycetota</taxon>
        <taxon>Actinomycetes</taxon>
        <taxon>Mycobacteriales</taxon>
        <taxon>Mycobacteriaceae</taxon>
        <taxon>Mycobacterium</taxon>
    </lineage>
</organism>
<sequence length="270" mass="30641">MAFTRIHSFLASAGNTSMYKRVWRFWYPLMTHKLGTDEIMFINWAYEEDPPMALPLEASDEPNRAHINLYHRTATQVNLSGKRILEVSCGHGGGASYLTRALHPASYTGLDLNPAGIKLCQKRHQLPGLEFVRGDAENLPFDNESFDVVINIEASHCYPHFPRFLAEVVRVLRPGGHLAYADLRPSNKVGEWEVDFANSRLQQLSQREINAEVLRGIASNSQKSRDLVDRHLPAFLRFAGREFIGVQGTQLSRYLEGGELSYRMYSFAKD</sequence>
<evidence type="ECO:0000250" key="1"/>
<evidence type="ECO:0000305" key="2"/>
<accession>Q9CD86</accession>
<keyword id="KW-0444">Lipid biosynthesis</keyword>
<keyword id="KW-0443">Lipid metabolism</keyword>
<keyword id="KW-0489">Methyltransferase</keyword>
<keyword id="KW-1185">Reference proteome</keyword>
<keyword id="KW-0808">Transferase</keyword>
<proteinExistence type="inferred from homology"/>